<evidence type="ECO:0000255" key="1">
    <source>
        <dbReference type="HAMAP-Rule" id="MF_00578"/>
    </source>
</evidence>
<organism>
    <name type="scientific">Cronobacter sakazakii (strain ATCC BAA-894)</name>
    <name type="common">Enterobacter sakazakii</name>
    <dbReference type="NCBI Taxonomy" id="290339"/>
    <lineage>
        <taxon>Bacteria</taxon>
        <taxon>Pseudomonadati</taxon>
        <taxon>Pseudomonadota</taxon>
        <taxon>Gammaproteobacteria</taxon>
        <taxon>Enterobacterales</taxon>
        <taxon>Enterobacteriaceae</taxon>
        <taxon>Cronobacter</taxon>
    </lineage>
</organism>
<sequence>MIPDVSQALAWLTEHPEALKGIRRGLERETLRVTPEGELATTGHPESLGAALTHKWITTDFAEALLEFITPVDGDIDHMLTVMRDIHRHTARALGDERMWPLSMPCYIKEGQDIELAQYGTSNIGRFKTLYRSGLKNRYGALMQTISGVHYNFSLPLAFWQAKCQVDDAESGKEAISAGYFRLIRNYYRFGWVIPYLFGASPAICSSFLQGKPTKLPFEKTDCGMYYLPYATSLRLSDLGYTNKSQSNLGITFNDLHGYVAGLKRAIKTPSEEYAKLGLKKDGEYLQINTNILQIENELYAPIRPKRVTRDGESPSDALLRGGIEYIEVRSLDINPFSPIGVDENQVRFLDLFMVWCALADAPEMSSDELLCTRTNWNRVILEGRKPGLTLGIGCETAQFPLEKVGKDLFRDLRRVAQTLDGIHGGQEYQQVCDRLVACFDDPELTYSAQILRSMIENGIGGTGRMLADRYRTMLREEPLQALHEEDFRQEQAASLARQREIEAADTEPFDEWLAKQA</sequence>
<comment type="catalytic activity">
    <reaction evidence="1">
        <text>L-cysteine + L-glutamate + ATP = gamma-L-glutamyl-L-cysteine + ADP + phosphate + H(+)</text>
        <dbReference type="Rhea" id="RHEA:13285"/>
        <dbReference type="ChEBI" id="CHEBI:15378"/>
        <dbReference type="ChEBI" id="CHEBI:29985"/>
        <dbReference type="ChEBI" id="CHEBI:30616"/>
        <dbReference type="ChEBI" id="CHEBI:35235"/>
        <dbReference type="ChEBI" id="CHEBI:43474"/>
        <dbReference type="ChEBI" id="CHEBI:58173"/>
        <dbReference type="ChEBI" id="CHEBI:456216"/>
        <dbReference type="EC" id="6.3.2.2"/>
    </reaction>
</comment>
<comment type="pathway">
    <text evidence="1">Sulfur metabolism; glutathione biosynthesis; glutathione from L-cysteine and L-glutamate: step 1/2.</text>
</comment>
<comment type="similarity">
    <text evidence="1">Belongs to the glutamate--cysteine ligase type 1 family. Type 1 subfamily.</text>
</comment>
<gene>
    <name evidence="1" type="primary">gshA</name>
    <name type="ordered locus">ESA_00579</name>
</gene>
<accession>A7MJ27</accession>
<proteinExistence type="inferred from homology"/>
<feature type="chain" id="PRO_1000025172" description="Glutamate--cysteine ligase">
    <location>
        <begin position="1"/>
        <end position="518"/>
    </location>
</feature>
<protein>
    <recommendedName>
        <fullName evidence="1">Glutamate--cysteine ligase</fullName>
        <ecNumber evidence="1">6.3.2.2</ecNumber>
    </recommendedName>
    <alternativeName>
        <fullName evidence="1">Gamma-ECS</fullName>
        <shortName evidence="1">GCS</shortName>
    </alternativeName>
    <alternativeName>
        <fullName evidence="1">Gamma-glutamylcysteine synthetase</fullName>
    </alternativeName>
</protein>
<name>GSH1_CROS8</name>
<dbReference type="EC" id="6.3.2.2" evidence="1"/>
<dbReference type="EMBL" id="CP000783">
    <property type="protein sequence ID" value="ABU75864.1"/>
    <property type="molecule type" value="Genomic_DNA"/>
</dbReference>
<dbReference type="RefSeq" id="WP_004386441.1">
    <property type="nucleotide sequence ID" value="NC_009778.1"/>
</dbReference>
<dbReference type="SMR" id="A7MJ27"/>
<dbReference type="KEGG" id="esa:ESA_00579"/>
<dbReference type="PATRIC" id="fig|290339.8.peg.519"/>
<dbReference type="HOGENOM" id="CLU_020728_3_0_6"/>
<dbReference type="UniPathway" id="UPA00142">
    <property type="reaction ID" value="UER00209"/>
</dbReference>
<dbReference type="Proteomes" id="UP000000260">
    <property type="component" value="Chromosome"/>
</dbReference>
<dbReference type="GO" id="GO:0005829">
    <property type="term" value="C:cytosol"/>
    <property type="evidence" value="ECO:0007669"/>
    <property type="project" value="TreeGrafter"/>
</dbReference>
<dbReference type="GO" id="GO:0005524">
    <property type="term" value="F:ATP binding"/>
    <property type="evidence" value="ECO:0007669"/>
    <property type="project" value="UniProtKB-KW"/>
</dbReference>
<dbReference type="GO" id="GO:0004357">
    <property type="term" value="F:glutamate-cysteine ligase activity"/>
    <property type="evidence" value="ECO:0007669"/>
    <property type="project" value="UniProtKB-UniRule"/>
</dbReference>
<dbReference type="GO" id="GO:0046872">
    <property type="term" value="F:metal ion binding"/>
    <property type="evidence" value="ECO:0007669"/>
    <property type="project" value="TreeGrafter"/>
</dbReference>
<dbReference type="GO" id="GO:0006750">
    <property type="term" value="P:glutathione biosynthetic process"/>
    <property type="evidence" value="ECO:0007669"/>
    <property type="project" value="UniProtKB-UniRule"/>
</dbReference>
<dbReference type="FunFam" id="3.30.590.20:FF:000001">
    <property type="entry name" value="Glutamate--cysteine ligase"/>
    <property type="match status" value="1"/>
</dbReference>
<dbReference type="Gene3D" id="3.30.590.20">
    <property type="match status" value="1"/>
</dbReference>
<dbReference type="HAMAP" id="MF_00578">
    <property type="entry name" value="Glu_cys_ligase"/>
    <property type="match status" value="1"/>
</dbReference>
<dbReference type="InterPro" id="IPR014746">
    <property type="entry name" value="Gln_synth/guanido_kin_cat_dom"/>
</dbReference>
<dbReference type="InterPro" id="IPR007370">
    <property type="entry name" value="Glu_cys_ligase"/>
</dbReference>
<dbReference type="InterPro" id="IPR006334">
    <property type="entry name" value="Glut_cys_ligase"/>
</dbReference>
<dbReference type="NCBIfam" id="TIGR01434">
    <property type="entry name" value="glu_cys_ligase"/>
    <property type="match status" value="1"/>
</dbReference>
<dbReference type="PANTHER" id="PTHR38761">
    <property type="entry name" value="GLUTAMATE--CYSTEINE LIGASE"/>
    <property type="match status" value="1"/>
</dbReference>
<dbReference type="PANTHER" id="PTHR38761:SF1">
    <property type="entry name" value="GLUTAMATE--CYSTEINE LIGASE"/>
    <property type="match status" value="1"/>
</dbReference>
<dbReference type="Pfam" id="PF04262">
    <property type="entry name" value="Glu_cys_ligase"/>
    <property type="match status" value="1"/>
</dbReference>
<dbReference type="SUPFAM" id="SSF55931">
    <property type="entry name" value="Glutamine synthetase/guanido kinase"/>
    <property type="match status" value="1"/>
</dbReference>
<keyword id="KW-0067">ATP-binding</keyword>
<keyword id="KW-0317">Glutathione biosynthesis</keyword>
<keyword id="KW-0436">Ligase</keyword>
<keyword id="KW-0547">Nucleotide-binding</keyword>
<keyword id="KW-1185">Reference proteome</keyword>
<reference key="1">
    <citation type="journal article" date="2010" name="PLoS ONE">
        <title>Genome sequence of Cronobacter sakazakii BAA-894 and comparative genomic hybridization analysis with other Cronobacter species.</title>
        <authorList>
            <person name="Kucerova E."/>
            <person name="Clifton S.W."/>
            <person name="Xia X.Q."/>
            <person name="Long F."/>
            <person name="Porwollik S."/>
            <person name="Fulton L."/>
            <person name="Fronick C."/>
            <person name="Minx P."/>
            <person name="Kyung K."/>
            <person name="Warren W."/>
            <person name="Fulton R."/>
            <person name="Feng D."/>
            <person name="Wollam A."/>
            <person name="Shah N."/>
            <person name="Bhonagiri V."/>
            <person name="Nash W.E."/>
            <person name="Hallsworth-Pepin K."/>
            <person name="Wilson R.K."/>
            <person name="McClelland M."/>
            <person name="Forsythe S.J."/>
        </authorList>
    </citation>
    <scope>NUCLEOTIDE SEQUENCE [LARGE SCALE GENOMIC DNA]</scope>
    <source>
        <strain>ATCC BAA-894</strain>
    </source>
</reference>